<feature type="chain" id="PRO_1000131350" description="Phosphatidylserine decarboxylase beta chain" evidence="1">
    <location>
        <begin position="1"/>
        <end position="253"/>
    </location>
</feature>
<feature type="chain" id="PRO_1000131351" description="Phosphatidylserine decarboxylase alpha chain" evidence="1">
    <location>
        <begin position="254"/>
        <end position="288"/>
    </location>
</feature>
<feature type="active site" description="Charge relay system; for autoendoproteolytic cleavage activity" evidence="1">
    <location>
        <position position="92"/>
    </location>
</feature>
<feature type="active site" description="Charge relay system; for autoendoproteolytic cleavage activity" evidence="1">
    <location>
        <position position="149"/>
    </location>
</feature>
<feature type="active site" description="Charge relay system; for autoendoproteolytic cleavage activity" evidence="1">
    <location>
        <position position="254"/>
    </location>
</feature>
<feature type="active site" description="Schiff-base intermediate with substrate; via pyruvic acid; for decarboxylase activity" evidence="1">
    <location>
        <position position="254"/>
    </location>
</feature>
<feature type="site" description="Cleavage (non-hydrolytic); by autocatalysis" evidence="1">
    <location>
        <begin position="253"/>
        <end position="254"/>
    </location>
</feature>
<feature type="modified residue" description="Pyruvic acid (Ser); by autocatalysis" evidence="1">
    <location>
        <position position="254"/>
    </location>
</feature>
<proteinExistence type="inferred from homology"/>
<accession>A9IM91</accession>
<protein>
    <recommendedName>
        <fullName evidence="1">Phosphatidylserine decarboxylase proenzyme</fullName>
        <ecNumber evidence="1">4.1.1.65</ecNumber>
    </recommendedName>
    <component>
        <recommendedName>
            <fullName evidence="1">Phosphatidylserine decarboxylase alpha chain</fullName>
        </recommendedName>
    </component>
    <component>
        <recommendedName>
            <fullName evidence="1">Phosphatidylserine decarboxylase beta chain</fullName>
        </recommendedName>
    </component>
</protein>
<dbReference type="EC" id="4.1.1.65" evidence="1"/>
<dbReference type="EMBL" id="AM902716">
    <property type="protein sequence ID" value="CAP42680.1"/>
    <property type="molecule type" value="Genomic_DNA"/>
</dbReference>
<dbReference type="SMR" id="A9IM91"/>
<dbReference type="STRING" id="94624.Bpet2337"/>
<dbReference type="KEGG" id="bpt:Bpet2337"/>
<dbReference type="eggNOG" id="COG0688">
    <property type="taxonomic scope" value="Bacteria"/>
</dbReference>
<dbReference type="UniPathway" id="UPA00558">
    <property type="reaction ID" value="UER00616"/>
</dbReference>
<dbReference type="Proteomes" id="UP000001225">
    <property type="component" value="Chromosome"/>
</dbReference>
<dbReference type="GO" id="GO:0005886">
    <property type="term" value="C:plasma membrane"/>
    <property type="evidence" value="ECO:0007669"/>
    <property type="project" value="UniProtKB-SubCell"/>
</dbReference>
<dbReference type="GO" id="GO:0004609">
    <property type="term" value="F:phosphatidylserine decarboxylase activity"/>
    <property type="evidence" value="ECO:0007669"/>
    <property type="project" value="UniProtKB-UniRule"/>
</dbReference>
<dbReference type="GO" id="GO:0006646">
    <property type="term" value="P:phosphatidylethanolamine biosynthetic process"/>
    <property type="evidence" value="ECO:0007669"/>
    <property type="project" value="UniProtKB-UniRule"/>
</dbReference>
<dbReference type="HAMAP" id="MF_00662">
    <property type="entry name" value="PS_decarb_PSD_B_type1"/>
    <property type="match status" value="1"/>
</dbReference>
<dbReference type="InterPro" id="IPR003817">
    <property type="entry name" value="PS_Dcarbxylase"/>
</dbReference>
<dbReference type="InterPro" id="IPR033177">
    <property type="entry name" value="PSD-B"/>
</dbReference>
<dbReference type="InterPro" id="IPR033178">
    <property type="entry name" value="PSD_type1_pro"/>
</dbReference>
<dbReference type="NCBIfam" id="TIGR00163">
    <property type="entry name" value="PS_decarb"/>
    <property type="match status" value="1"/>
</dbReference>
<dbReference type="PANTHER" id="PTHR10067">
    <property type="entry name" value="PHOSPHATIDYLSERINE DECARBOXYLASE"/>
    <property type="match status" value="1"/>
</dbReference>
<dbReference type="PANTHER" id="PTHR10067:SF6">
    <property type="entry name" value="PHOSPHATIDYLSERINE DECARBOXYLASE PROENZYME, MITOCHONDRIAL"/>
    <property type="match status" value="1"/>
</dbReference>
<dbReference type="Pfam" id="PF02666">
    <property type="entry name" value="PS_Dcarbxylase"/>
    <property type="match status" value="1"/>
</dbReference>
<name>PSD_BORPD</name>
<gene>
    <name evidence="1" type="primary">psd</name>
    <name type="ordered locus">Bpet2337</name>
</gene>
<organism>
    <name type="scientific">Bordetella petrii (strain ATCC BAA-461 / DSM 12804 / CCUG 43448)</name>
    <dbReference type="NCBI Taxonomy" id="340100"/>
    <lineage>
        <taxon>Bacteria</taxon>
        <taxon>Pseudomonadati</taxon>
        <taxon>Pseudomonadota</taxon>
        <taxon>Betaproteobacteria</taxon>
        <taxon>Burkholderiales</taxon>
        <taxon>Alcaligenaceae</taxon>
        <taxon>Bordetella</taxon>
    </lineage>
</organism>
<evidence type="ECO:0000255" key="1">
    <source>
        <dbReference type="HAMAP-Rule" id="MF_00662"/>
    </source>
</evidence>
<keyword id="KW-1003">Cell membrane</keyword>
<keyword id="KW-0210">Decarboxylase</keyword>
<keyword id="KW-0444">Lipid biosynthesis</keyword>
<keyword id="KW-0443">Lipid metabolism</keyword>
<keyword id="KW-0456">Lyase</keyword>
<keyword id="KW-0472">Membrane</keyword>
<keyword id="KW-0594">Phospholipid biosynthesis</keyword>
<keyword id="KW-1208">Phospholipid metabolism</keyword>
<keyword id="KW-0670">Pyruvate</keyword>
<keyword id="KW-0865">Zymogen</keyword>
<sequence>MLFKDQLFLASQYAAPHHLVSRLMGLAADCRTPAIKNWMISRFVRRYGVDMSEALVQDPLAYDTFNQFFTRKLRADARPLDTEPGAVLCPADGAISQLGPIEHGRIFQAKGHSYSLTSLLGGDPARAEPFMGGDFATIYLSPRDYHRVHMPCAGTLREMVHVPGRLFSVNPLTATHVPELFARNERVACLFDTEYGPMAMVLVGAMIVASIETAWAGLVTPHKRQIRAQRYDEAARAPIHLDKGAEMGLFKLGSTVIVLFGPGRVRWTDTPSVRGPVRMGELLALPKA</sequence>
<comment type="function">
    <text evidence="1">Catalyzes the formation of phosphatidylethanolamine (PtdEtn) from phosphatidylserine (PtdSer).</text>
</comment>
<comment type="catalytic activity">
    <reaction evidence="1">
        <text>a 1,2-diacyl-sn-glycero-3-phospho-L-serine + H(+) = a 1,2-diacyl-sn-glycero-3-phosphoethanolamine + CO2</text>
        <dbReference type="Rhea" id="RHEA:20828"/>
        <dbReference type="ChEBI" id="CHEBI:15378"/>
        <dbReference type="ChEBI" id="CHEBI:16526"/>
        <dbReference type="ChEBI" id="CHEBI:57262"/>
        <dbReference type="ChEBI" id="CHEBI:64612"/>
        <dbReference type="EC" id="4.1.1.65"/>
    </reaction>
</comment>
<comment type="cofactor">
    <cofactor evidence="1">
        <name>pyruvate</name>
        <dbReference type="ChEBI" id="CHEBI:15361"/>
    </cofactor>
    <text evidence="1">Binds 1 pyruvoyl group covalently per subunit.</text>
</comment>
<comment type="pathway">
    <text evidence="1">Phospholipid metabolism; phosphatidylethanolamine biosynthesis; phosphatidylethanolamine from CDP-diacylglycerol: step 2/2.</text>
</comment>
<comment type="subunit">
    <text evidence="1">Heterodimer of a large membrane-associated beta subunit and a small pyruvoyl-containing alpha subunit.</text>
</comment>
<comment type="subcellular location">
    <subcellularLocation>
        <location evidence="1">Cell membrane</location>
        <topology evidence="1">Peripheral membrane protein</topology>
    </subcellularLocation>
</comment>
<comment type="PTM">
    <text evidence="1">Is synthesized initially as an inactive proenzyme. Formation of the active enzyme involves a self-maturation process in which the active site pyruvoyl group is generated from an internal serine residue via an autocatalytic post-translational modification. Two non-identical subunits are generated from the proenzyme in this reaction, and the pyruvate is formed at the N-terminus of the alpha chain, which is derived from the carboxyl end of the proenzyme. The autoendoproteolytic cleavage occurs by a canonical serine protease mechanism, in which the side chain hydroxyl group of the serine supplies its oxygen atom to form the C-terminus of the beta chain, while the remainder of the serine residue undergoes an oxidative deamination to produce ammonia and the pyruvoyl prosthetic group on the alpha chain. During this reaction, the Ser that is part of the protease active site of the proenzyme becomes the pyruvoyl prosthetic group, which constitutes an essential element of the active site of the mature decarboxylase.</text>
</comment>
<comment type="similarity">
    <text evidence="1">Belongs to the phosphatidylserine decarboxylase family. PSD-B subfamily. Prokaryotic type I sub-subfamily.</text>
</comment>
<reference key="1">
    <citation type="journal article" date="2008" name="BMC Genomics">
        <title>The missing link: Bordetella petrii is endowed with both the metabolic versatility of environmental bacteria and virulence traits of pathogenic Bordetellae.</title>
        <authorList>
            <person name="Gross R."/>
            <person name="Guzman C.A."/>
            <person name="Sebaihia M."/>
            <person name="Martin dos Santos V.A.P."/>
            <person name="Pieper D.H."/>
            <person name="Koebnik R."/>
            <person name="Lechner M."/>
            <person name="Bartels D."/>
            <person name="Buhrmester J."/>
            <person name="Choudhuri J.V."/>
            <person name="Ebensen T."/>
            <person name="Gaigalat L."/>
            <person name="Herrmann S."/>
            <person name="Khachane A.N."/>
            <person name="Larisch C."/>
            <person name="Link S."/>
            <person name="Linke B."/>
            <person name="Meyer F."/>
            <person name="Mormann S."/>
            <person name="Nakunst D."/>
            <person name="Rueckert C."/>
            <person name="Schneiker-Bekel S."/>
            <person name="Schulze K."/>
            <person name="Voerholter F.-J."/>
            <person name="Yevsa T."/>
            <person name="Engle J.T."/>
            <person name="Goldman W.E."/>
            <person name="Puehler A."/>
            <person name="Goebel U.B."/>
            <person name="Goesmann A."/>
            <person name="Bloecker H."/>
            <person name="Kaiser O."/>
            <person name="Martinez-Arias R."/>
        </authorList>
    </citation>
    <scope>NUCLEOTIDE SEQUENCE [LARGE SCALE GENOMIC DNA]</scope>
    <source>
        <strain>ATCC BAA-461 / DSM 12804 / CCUG 43448</strain>
    </source>
</reference>